<reference key="1">
    <citation type="submission" date="1996-07" db="EMBL/GenBank/DDBJ databases">
        <authorList>
            <person name="Martin S."/>
            <person name="Tellam J.T."/>
            <person name="Livington C."/>
            <person name="Slot J.W."/>
            <person name="Gould G.W."/>
            <person name="James D.E."/>
        </authorList>
    </citation>
    <scope>NUCLEOTIDE SEQUENCE [MRNA]</scope>
</reference>
<reference key="2">
    <citation type="journal article" date="2001" name="Mol. Cell. Biol.">
        <title>VAMP3 null mice display normal constitutive, insulin- and exercise-regulated vesicle trafficking.</title>
        <authorList>
            <person name="Yang C.M."/>
            <person name="Mora S."/>
            <person name="Ryder J.W."/>
            <person name="Coker K.J."/>
            <person name="Hansen P."/>
            <person name="Allen L.A."/>
            <person name="Pessin J.E."/>
        </authorList>
    </citation>
    <scope>NUCLEOTIDE SEQUENCE [GENOMIC DNA]</scope>
    <source>
        <strain>C57BL/6x129SV/J</strain>
    </source>
</reference>
<reference key="3">
    <citation type="journal article" date="2005" name="Science">
        <title>The transcriptional landscape of the mammalian genome.</title>
        <authorList>
            <person name="Carninci P."/>
            <person name="Kasukawa T."/>
            <person name="Katayama S."/>
            <person name="Gough J."/>
            <person name="Frith M.C."/>
            <person name="Maeda N."/>
            <person name="Oyama R."/>
            <person name="Ravasi T."/>
            <person name="Lenhard B."/>
            <person name="Wells C."/>
            <person name="Kodzius R."/>
            <person name="Shimokawa K."/>
            <person name="Bajic V.B."/>
            <person name="Brenner S.E."/>
            <person name="Batalov S."/>
            <person name="Forrest A.R."/>
            <person name="Zavolan M."/>
            <person name="Davis M.J."/>
            <person name="Wilming L.G."/>
            <person name="Aidinis V."/>
            <person name="Allen J.E."/>
            <person name="Ambesi-Impiombato A."/>
            <person name="Apweiler R."/>
            <person name="Aturaliya R.N."/>
            <person name="Bailey T.L."/>
            <person name="Bansal M."/>
            <person name="Baxter L."/>
            <person name="Beisel K.W."/>
            <person name="Bersano T."/>
            <person name="Bono H."/>
            <person name="Chalk A.M."/>
            <person name="Chiu K.P."/>
            <person name="Choudhary V."/>
            <person name="Christoffels A."/>
            <person name="Clutterbuck D.R."/>
            <person name="Crowe M.L."/>
            <person name="Dalla E."/>
            <person name="Dalrymple B.P."/>
            <person name="de Bono B."/>
            <person name="Della Gatta G."/>
            <person name="di Bernardo D."/>
            <person name="Down T."/>
            <person name="Engstrom P."/>
            <person name="Fagiolini M."/>
            <person name="Faulkner G."/>
            <person name="Fletcher C.F."/>
            <person name="Fukushima T."/>
            <person name="Furuno M."/>
            <person name="Futaki S."/>
            <person name="Gariboldi M."/>
            <person name="Georgii-Hemming P."/>
            <person name="Gingeras T.R."/>
            <person name="Gojobori T."/>
            <person name="Green R.E."/>
            <person name="Gustincich S."/>
            <person name="Harbers M."/>
            <person name="Hayashi Y."/>
            <person name="Hensch T.K."/>
            <person name="Hirokawa N."/>
            <person name="Hill D."/>
            <person name="Huminiecki L."/>
            <person name="Iacono M."/>
            <person name="Ikeo K."/>
            <person name="Iwama A."/>
            <person name="Ishikawa T."/>
            <person name="Jakt M."/>
            <person name="Kanapin A."/>
            <person name="Katoh M."/>
            <person name="Kawasawa Y."/>
            <person name="Kelso J."/>
            <person name="Kitamura H."/>
            <person name="Kitano H."/>
            <person name="Kollias G."/>
            <person name="Krishnan S.P."/>
            <person name="Kruger A."/>
            <person name="Kummerfeld S.K."/>
            <person name="Kurochkin I.V."/>
            <person name="Lareau L.F."/>
            <person name="Lazarevic D."/>
            <person name="Lipovich L."/>
            <person name="Liu J."/>
            <person name="Liuni S."/>
            <person name="McWilliam S."/>
            <person name="Madan Babu M."/>
            <person name="Madera M."/>
            <person name="Marchionni L."/>
            <person name="Matsuda H."/>
            <person name="Matsuzawa S."/>
            <person name="Miki H."/>
            <person name="Mignone F."/>
            <person name="Miyake S."/>
            <person name="Morris K."/>
            <person name="Mottagui-Tabar S."/>
            <person name="Mulder N."/>
            <person name="Nakano N."/>
            <person name="Nakauchi H."/>
            <person name="Ng P."/>
            <person name="Nilsson R."/>
            <person name="Nishiguchi S."/>
            <person name="Nishikawa S."/>
            <person name="Nori F."/>
            <person name="Ohara O."/>
            <person name="Okazaki Y."/>
            <person name="Orlando V."/>
            <person name="Pang K.C."/>
            <person name="Pavan W.J."/>
            <person name="Pavesi G."/>
            <person name="Pesole G."/>
            <person name="Petrovsky N."/>
            <person name="Piazza S."/>
            <person name="Reed J."/>
            <person name="Reid J.F."/>
            <person name="Ring B.Z."/>
            <person name="Ringwald M."/>
            <person name="Rost B."/>
            <person name="Ruan Y."/>
            <person name="Salzberg S.L."/>
            <person name="Sandelin A."/>
            <person name="Schneider C."/>
            <person name="Schoenbach C."/>
            <person name="Sekiguchi K."/>
            <person name="Semple C.A."/>
            <person name="Seno S."/>
            <person name="Sessa L."/>
            <person name="Sheng Y."/>
            <person name="Shibata Y."/>
            <person name="Shimada H."/>
            <person name="Shimada K."/>
            <person name="Silva D."/>
            <person name="Sinclair B."/>
            <person name="Sperling S."/>
            <person name="Stupka E."/>
            <person name="Sugiura K."/>
            <person name="Sultana R."/>
            <person name="Takenaka Y."/>
            <person name="Taki K."/>
            <person name="Tammoja K."/>
            <person name="Tan S.L."/>
            <person name="Tang S."/>
            <person name="Taylor M.S."/>
            <person name="Tegner J."/>
            <person name="Teichmann S.A."/>
            <person name="Ueda H.R."/>
            <person name="van Nimwegen E."/>
            <person name="Verardo R."/>
            <person name="Wei C.L."/>
            <person name="Yagi K."/>
            <person name="Yamanishi H."/>
            <person name="Zabarovsky E."/>
            <person name="Zhu S."/>
            <person name="Zimmer A."/>
            <person name="Hide W."/>
            <person name="Bult C."/>
            <person name="Grimmond S.M."/>
            <person name="Teasdale R.D."/>
            <person name="Liu E.T."/>
            <person name="Brusic V."/>
            <person name="Quackenbush J."/>
            <person name="Wahlestedt C."/>
            <person name="Mattick J.S."/>
            <person name="Hume D.A."/>
            <person name="Kai C."/>
            <person name="Sasaki D."/>
            <person name="Tomaru Y."/>
            <person name="Fukuda S."/>
            <person name="Kanamori-Katayama M."/>
            <person name="Suzuki M."/>
            <person name="Aoki J."/>
            <person name="Arakawa T."/>
            <person name="Iida J."/>
            <person name="Imamura K."/>
            <person name="Itoh M."/>
            <person name="Kato T."/>
            <person name="Kawaji H."/>
            <person name="Kawagashira N."/>
            <person name="Kawashima T."/>
            <person name="Kojima M."/>
            <person name="Kondo S."/>
            <person name="Konno H."/>
            <person name="Nakano K."/>
            <person name="Ninomiya N."/>
            <person name="Nishio T."/>
            <person name="Okada M."/>
            <person name="Plessy C."/>
            <person name="Shibata K."/>
            <person name="Shiraki T."/>
            <person name="Suzuki S."/>
            <person name="Tagami M."/>
            <person name="Waki K."/>
            <person name="Watahiki A."/>
            <person name="Okamura-Oho Y."/>
            <person name="Suzuki H."/>
            <person name="Kawai J."/>
            <person name="Hayashizaki Y."/>
        </authorList>
    </citation>
    <scope>NUCLEOTIDE SEQUENCE [LARGE SCALE MRNA]</scope>
    <source>
        <strain>C57BL/6J</strain>
        <tissue>Heart</tissue>
        <tissue>Liver</tissue>
        <tissue>Lung</tissue>
        <tissue>Spinal ganglion</tissue>
    </source>
</reference>
<reference key="4">
    <citation type="journal article" date="2004" name="Genome Res.">
        <title>The status, quality, and expansion of the NIH full-length cDNA project: the Mammalian Gene Collection (MGC).</title>
        <authorList>
            <consortium name="The MGC Project Team"/>
        </authorList>
    </citation>
    <scope>NUCLEOTIDE SEQUENCE [LARGE SCALE MRNA]</scope>
    <source>
        <strain>C57BL/6J</strain>
        <tissue>Brain</tissue>
    </source>
</reference>
<reference key="5">
    <citation type="journal article" date="1997" name="J. Cell Biol.">
        <title>Export of cellubrevin from the endoplasmic reticulum is controlled by BAP31.</title>
        <authorList>
            <person name="Annaert W.G."/>
            <person name="Becker B."/>
            <person name="Kistner U."/>
            <person name="Reth M."/>
            <person name="Jahn R."/>
        </authorList>
    </citation>
    <scope>INTERACTION WITH BCAP31</scope>
</reference>
<reference key="6">
    <citation type="journal article" date="2010" name="Cell">
        <title>A tissue-specific atlas of mouse protein phosphorylation and expression.</title>
        <authorList>
            <person name="Huttlin E.L."/>
            <person name="Jedrychowski M.P."/>
            <person name="Elias J.E."/>
            <person name="Goswami T."/>
            <person name="Rad R."/>
            <person name="Beausoleil S.A."/>
            <person name="Villen J."/>
            <person name="Haas W."/>
            <person name="Sowa M.E."/>
            <person name="Gygi S.P."/>
        </authorList>
    </citation>
    <scope>IDENTIFICATION BY MASS SPECTROMETRY [LARGE SCALE ANALYSIS]</scope>
    <source>
        <tissue>Brain</tissue>
        <tissue>Brown adipose tissue</tissue>
        <tissue>Heart</tissue>
        <tissue>Kidney</tissue>
        <tissue>Liver</tissue>
        <tissue>Lung</tissue>
        <tissue>Pancreas</tissue>
        <tissue>Spleen</tissue>
        <tissue>Testis</tissue>
    </source>
</reference>
<reference key="7">
    <citation type="journal article" date="2010" name="EMBO J.">
        <title>Identification of a novel Bves function: regulation of vesicular transport.</title>
        <authorList>
            <person name="Hager H.A."/>
            <person name="Roberts R.J."/>
            <person name="Cross E.E."/>
            <person name="Proux-Gillardeaux V."/>
            <person name="Bader D.M."/>
        </authorList>
    </citation>
    <scope>INTERACTION WITH POPDC1</scope>
</reference>
<reference key="8">
    <citation type="journal article" date="2017" name="Nat. Commun.">
        <title>Identification and characterization of a novel botulinum neurotoxin.</title>
        <authorList>
            <person name="Zhang S."/>
            <person name="Masuyer G."/>
            <person name="Zhang J."/>
            <person name="Shen Y."/>
            <person name="Lundin D."/>
            <person name="Henriksson L."/>
            <person name="Miyashita S.I."/>
            <person name="Martinez-Carranza M."/>
            <person name="Dong M."/>
            <person name="Stenmark P."/>
        </authorList>
    </citation>
    <scope>PROTEOLYTIC CLEAVAGE (MICROBIAL INFECTION) BY C.BOTULINUM NEUROTOXIN TYPE X</scope>
</reference>
<keyword id="KW-0175">Coiled coil</keyword>
<keyword id="KW-0967">Endosome</keyword>
<keyword id="KW-1017">Isopeptide bond</keyword>
<keyword id="KW-0472">Membrane</keyword>
<keyword id="KW-0653">Protein transport</keyword>
<keyword id="KW-1185">Reference proteome</keyword>
<keyword id="KW-0770">Synapse</keyword>
<keyword id="KW-0771">Synaptosome</keyword>
<keyword id="KW-0812">Transmembrane</keyword>
<keyword id="KW-1133">Transmembrane helix</keyword>
<keyword id="KW-0813">Transport</keyword>
<keyword id="KW-0832">Ubl conjugation</keyword>
<organism>
    <name type="scientific">Mus musculus</name>
    <name type="common">Mouse</name>
    <dbReference type="NCBI Taxonomy" id="10090"/>
    <lineage>
        <taxon>Eukaryota</taxon>
        <taxon>Metazoa</taxon>
        <taxon>Chordata</taxon>
        <taxon>Craniata</taxon>
        <taxon>Vertebrata</taxon>
        <taxon>Euteleostomi</taxon>
        <taxon>Mammalia</taxon>
        <taxon>Eutheria</taxon>
        <taxon>Euarchontoglires</taxon>
        <taxon>Glires</taxon>
        <taxon>Rodentia</taxon>
        <taxon>Myomorpha</taxon>
        <taxon>Muroidea</taxon>
        <taxon>Muridae</taxon>
        <taxon>Murinae</taxon>
        <taxon>Mus</taxon>
        <taxon>Mus</taxon>
    </lineage>
</organism>
<evidence type="ECO:0000250" key="1">
    <source>
        <dbReference type="UniProtKB" id="Q15836"/>
    </source>
</evidence>
<evidence type="ECO:0000255" key="2"/>
<evidence type="ECO:0000255" key="3">
    <source>
        <dbReference type="PROSITE-ProRule" id="PRU00290"/>
    </source>
</evidence>
<evidence type="ECO:0000256" key="4">
    <source>
        <dbReference type="SAM" id="MobiDB-lite"/>
    </source>
</evidence>
<evidence type="ECO:0000269" key="5">
    <source>
    </source>
</evidence>
<evidence type="ECO:0000269" key="6">
    <source>
    </source>
</evidence>
<evidence type="ECO:0000269" key="7">
    <source>
    </source>
</evidence>
<evidence type="ECO:0000305" key="8"/>
<accession>P63024</accession>
<accession>Q3TH70</accession>
<accession>Q64271</accession>
<sequence length="103" mass="11480">MSTGVPSGSSAATGSNRRLQQTQNQVDEVVDIMRVNVDKVLERDQKLSELDDRADALQAGASQFETSAAKLKRKYWWKNCKMWAIGISVLVIIVIIIIVWCVS</sequence>
<name>VAMP3_MOUSE</name>
<comment type="function">
    <text evidence="1">SNARE involved in vesicular transport from the late endosomes to the trans-Golgi network.</text>
</comment>
<comment type="subunit">
    <text evidence="1 5 7">Interacts with POPDC1 (via the C-terminus cytoplasmic tail). Interacts with BCAP31; involved in VAMP3 export from the endoplasmic reticulum. Interacts with BAIAP3; this interaction is increased in the presence of calcium (By similarity). Interacts with PICALM (By similarity).</text>
</comment>
<comment type="subcellular location">
    <subcellularLocation>
        <location evidence="1">Early endosome membrane</location>
        <topology evidence="2">Single-pass type IV membrane protein</topology>
    </subcellularLocation>
    <subcellularLocation>
        <location evidence="1">Recycling endosome membrane</location>
        <topology evidence="2">Single-pass type IV membrane protein</topology>
    </subcellularLocation>
    <subcellularLocation>
        <location evidence="1">Synapse</location>
        <location evidence="1">Synaptosome</location>
    </subcellularLocation>
</comment>
<comment type="PTM">
    <text evidence="1">Ubiquitinated by RNF167 at Lys-70, Lys-72 and Lys-81, regulating the recycling endosome pathway.</text>
</comment>
<comment type="PTM">
    <text evidence="6">(Microbial infection) Targeted and hydrolyzed by C.botulinum neurotoxin type X (BoNT/X) which hydrolyzes the 53-Arg-|-Ala-54 bond and probably inhibits neurotransmitter release (PubMed:28770820). It remains unknown whether BoNT/X is ever produced, or what organisms it targets.</text>
</comment>
<comment type="similarity">
    <text evidence="8">Belongs to the synaptobrevin family.</text>
</comment>
<gene>
    <name type="primary">Vamp3</name>
    <name type="synonym">Syb3</name>
</gene>
<feature type="chain" id="PRO_0000206729" description="Vesicle-associated membrane protein 3">
    <location>
        <begin position="1"/>
        <end position="103"/>
    </location>
</feature>
<feature type="topological domain" description="Cytoplasmic" evidence="2">
    <location>
        <begin position="1"/>
        <end position="81"/>
    </location>
</feature>
<feature type="transmembrane region" description="Helical; Anchor for type IV membrane protein" evidence="2">
    <location>
        <begin position="82"/>
        <end position="102"/>
    </location>
</feature>
<feature type="topological domain" description="Vesicular" evidence="2">
    <location>
        <position position="103"/>
    </location>
</feature>
<feature type="domain" description="v-SNARE coiled-coil homology" evidence="3">
    <location>
        <begin position="18"/>
        <end position="78"/>
    </location>
</feature>
<feature type="region of interest" description="Disordered" evidence="4">
    <location>
        <begin position="1"/>
        <end position="25"/>
    </location>
</feature>
<feature type="site" description="(Microbial infection) Cleavage; by C.botulinum neurotoxin type X (BoNT/X)" evidence="6">
    <location>
        <begin position="53"/>
        <end position="54"/>
    </location>
</feature>
<feature type="cross-link" description="Glycyl lysine isopeptide (Lys-Gly) (interchain with G-Cter in ubiquitin)" evidence="1">
    <location>
        <position position="70"/>
    </location>
</feature>
<feature type="cross-link" description="Glycyl lysine isopeptide (Lys-Gly) (interchain with G-Cter in ubiquitin)" evidence="1">
    <location>
        <position position="72"/>
    </location>
</feature>
<feature type="cross-link" description="Glycyl lysine isopeptide (Lys-Gly) (interchain with G-Cter in ubiquitin)" evidence="1">
    <location>
        <position position="81"/>
    </location>
</feature>
<protein>
    <recommendedName>
        <fullName>Vesicle-associated membrane protein 3</fullName>
        <shortName>VAMP-3</shortName>
    </recommendedName>
    <alternativeName>
        <fullName>Cellubrevin</fullName>
        <shortName>CEB</shortName>
    </alternativeName>
    <alternativeName>
        <fullName>Synaptobrevin-3</fullName>
    </alternativeName>
</protein>
<proteinExistence type="evidence at protein level"/>
<dbReference type="EMBL" id="U60961">
    <property type="protein sequence ID" value="AAB03490.1"/>
    <property type="molecule type" value="mRNA"/>
</dbReference>
<dbReference type="EMBL" id="AF308434">
    <property type="protein sequence ID" value="AAG42468.1"/>
    <property type="molecule type" value="Genomic_DNA"/>
</dbReference>
<dbReference type="EMBL" id="AF308433">
    <property type="protein sequence ID" value="AAG42468.1"/>
    <property type="status" value="JOINED"/>
    <property type="molecule type" value="Genomic_DNA"/>
</dbReference>
<dbReference type="EMBL" id="AK051272">
    <property type="protein sequence ID" value="BAC34586.1"/>
    <property type="molecule type" value="mRNA"/>
</dbReference>
<dbReference type="EMBL" id="AK051691">
    <property type="protein sequence ID" value="BAC34723.1"/>
    <property type="molecule type" value="mRNA"/>
</dbReference>
<dbReference type="EMBL" id="AK165947">
    <property type="protein sequence ID" value="BAE38479.1"/>
    <property type="molecule type" value="mRNA"/>
</dbReference>
<dbReference type="EMBL" id="AK168413">
    <property type="protein sequence ID" value="BAE40328.1"/>
    <property type="molecule type" value="mRNA"/>
</dbReference>
<dbReference type="EMBL" id="AK169056">
    <property type="protein sequence ID" value="BAE40844.1"/>
    <property type="molecule type" value="mRNA"/>
</dbReference>
<dbReference type="EMBL" id="AK169087">
    <property type="protein sequence ID" value="BAE40871.1"/>
    <property type="molecule type" value="mRNA"/>
</dbReference>
<dbReference type="EMBL" id="BC060045">
    <property type="protein sequence ID" value="AAH60045.1"/>
    <property type="molecule type" value="mRNA"/>
</dbReference>
<dbReference type="CCDS" id="CCDS18979.1"/>
<dbReference type="RefSeq" id="NP_033524.1">
    <property type="nucleotide sequence ID" value="NM_009498.4"/>
</dbReference>
<dbReference type="BMRB" id="P63024"/>
<dbReference type="SMR" id="P63024"/>
<dbReference type="BioGRID" id="204496">
    <property type="interactions" value="8"/>
</dbReference>
<dbReference type="FunCoup" id="P63024">
    <property type="interactions" value="2438"/>
</dbReference>
<dbReference type="IntAct" id="P63024">
    <property type="interactions" value="3"/>
</dbReference>
<dbReference type="STRING" id="10090.ENSMUSP00000030797"/>
<dbReference type="iPTMnet" id="P63024"/>
<dbReference type="PhosphoSitePlus" id="P63024"/>
<dbReference type="SwissPalm" id="P63024"/>
<dbReference type="jPOST" id="P63024"/>
<dbReference type="PaxDb" id="10090-ENSMUSP00000030797"/>
<dbReference type="PeptideAtlas" id="P63024"/>
<dbReference type="ProteomicsDB" id="297908"/>
<dbReference type="Pumba" id="P63024"/>
<dbReference type="Antibodypedia" id="27516">
    <property type="antibodies" value="275 antibodies from 31 providers"/>
</dbReference>
<dbReference type="DNASU" id="22319"/>
<dbReference type="Ensembl" id="ENSMUST00000030797.4">
    <property type="protein sequence ID" value="ENSMUSP00000030797.4"/>
    <property type="gene ID" value="ENSMUSG00000028955.4"/>
</dbReference>
<dbReference type="GeneID" id="22319"/>
<dbReference type="KEGG" id="mmu:22319"/>
<dbReference type="UCSC" id="uc008vyj.1">
    <property type="organism name" value="mouse"/>
</dbReference>
<dbReference type="AGR" id="MGI:1321389"/>
<dbReference type="CTD" id="9341"/>
<dbReference type="MGI" id="MGI:1321389">
    <property type="gene designation" value="Vamp3"/>
</dbReference>
<dbReference type="VEuPathDB" id="HostDB:ENSMUSG00000028955"/>
<dbReference type="eggNOG" id="KOG0860">
    <property type="taxonomic scope" value="Eukaryota"/>
</dbReference>
<dbReference type="GeneTree" id="ENSGT00940000158192"/>
<dbReference type="HOGENOM" id="CLU_064620_4_1_1"/>
<dbReference type="InParanoid" id="P63024"/>
<dbReference type="OMA" id="MWVILIA"/>
<dbReference type="OrthoDB" id="10042941at2759"/>
<dbReference type="PhylomeDB" id="P63024"/>
<dbReference type="TreeFam" id="TF313666"/>
<dbReference type="Reactome" id="R-MMU-1236974">
    <property type="pathway name" value="ER-Phagosome pathway"/>
</dbReference>
<dbReference type="Reactome" id="R-MMU-6811440">
    <property type="pathway name" value="Retrograde transport at the Trans-Golgi-Network"/>
</dbReference>
<dbReference type="Reactome" id="R-MMU-8856825">
    <property type="pathway name" value="Cargo recognition for clathrin-mediated endocytosis"/>
</dbReference>
<dbReference type="Reactome" id="R-MMU-8856828">
    <property type="pathway name" value="Clathrin-mediated endocytosis"/>
</dbReference>
<dbReference type="Reactome" id="R-MMU-8980692">
    <property type="pathway name" value="RHOA GTPase cycle"/>
</dbReference>
<dbReference type="Reactome" id="R-MMU-9013026">
    <property type="pathway name" value="RHOB GTPase cycle"/>
</dbReference>
<dbReference type="Reactome" id="R-MMU-9013106">
    <property type="pathway name" value="RHOC GTPase cycle"/>
</dbReference>
<dbReference type="Reactome" id="R-MMU-9013149">
    <property type="pathway name" value="RAC1 GTPase cycle"/>
</dbReference>
<dbReference type="Reactome" id="R-MMU-9013404">
    <property type="pathway name" value="RAC2 GTPase cycle"/>
</dbReference>
<dbReference type="Reactome" id="R-MMU-9013405">
    <property type="pathway name" value="RHOD GTPase cycle"/>
</dbReference>
<dbReference type="Reactome" id="R-MMU-9013406">
    <property type="pathway name" value="RHOQ GTPase cycle"/>
</dbReference>
<dbReference type="Reactome" id="R-MMU-9013407">
    <property type="pathway name" value="RHOH GTPase cycle"/>
</dbReference>
<dbReference type="Reactome" id="R-MMU-9013408">
    <property type="pathway name" value="RHOG GTPase cycle"/>
</dbReference>
<dbReference type="Reactome" id="R-MMU-9013423">
    <property type="pathway name" value="RAC3 GTPase cycle"/>
</dbReference>
<dbReference type="Reactome" id="R-MMU-9035034">
    <property type="pathway name" value="RHOF GTPase cycle"/>
</dbReference>
<dbReference type="BioGRID-ORCS" id="22319">
    <property type="hits" value="0 hits in 76 CRISPR screens"/>
</dbReference>
<dbReference type="CD-CODE" id="CE726F99">
    <property type="entry name" value="Postsynaptic density"/>
</dbReference>
<dbReference type="ChiTaRS" id="Vamp3">
    <property type="organism name" value="mouse"/>
</dbReference>
<dbReference type="PRO" id="PR:P63024"/>
<dbReference type="Proteomes" id="UP000000589">
    <property type="component" value="Chromosome 4"/>
</dbReference>
<dbReference type="RNAct" id="P63024">
    <property type="molecule type" value="protein"/>
</dbReference>
<dbReference type="Bgee" id="ENSMUSG00000028955">
    <property type="expression patterns" value="Expressed in endothelial cell of lymphatic vessel and 262 other cell types or tissues"/>
</dbReference>
<dbReference type="GO" id="GO:0009986">
    <property type="term" value="C:cell surface"/>
    <property type="evidence" value="ECO:0000314"/>
    <property type="project" value="BHF-UCL"/>
</dbReference>
<dbReference type="GO" id="GO:0030136">
    <property type="term" value="C:clathrin-coated vesicle"/>
    <property type="evidence" value="ECO:0007669"/>
    <property type="project" value="Ensembl"/>
</dbReference>
<dbReference type="GO" id="GO:0031410">
    <property type="term" value="C:cytoplasmic vesicle"/>
    <property type="evidence" value="ECO:0000314"/>
    <property type="project" value="MGI"/>
</dbReference>
<dbReference type="GO" id="GO:0005829">
    <property type="term" value="C:cytosol"/>
    <property type="evidence" value="ECO:0000314"/>
    <property type="project" value="UniProtKB"/>
</dbReference>
<dbReference type="GO" id="GO:0005769">
    <property type="term" value="C:early endosome"/>
    <property type="evidence" value="ECO:0000314"/>
    <property type="project" value="MGI"/>
</dbReference>
<dbReference type="GO" id="GO:0031901">
    <property type="term" value="C:early endosome membrane"/>
    <property type="evidence" value="ECO:0007669"/>
    <property type="project" value="UniProtKB-SubCell"/>
</dbReference>
<dbReference type="GO" id="GO:0043005">
    <property type="term" value="C:neuron projection"/>
    <property type="evidence" value="ECO:0007669"/>
    <property type="project" value="UniProtKB-KW"/>
</dbReference>
<dbReference type="GO" id="GO:0048471">
    <property type="term" value="C:perinuclear region of cytoplasm"/>
    <property type="evidence" value="ECO:0000314"/>
    <property type="project" value="MGI"/>
</dbReference>
<dbReference type="GO" id="GO:0045335">
    <property type="term" value="C:phagocytic vesicle"/>
    <property type="evidence" value="ECO:0000314"/>
    <property type="project" value="MGI"/>
</dbReference>
<dbReference type="GO" id="GO:0005886">
    <property type="term" value="C:plasma membrane"/>
    <property type="evidence" value="ECO:0000314"/>
    <property type="project" value="UniProtKB"/>
</dbReference>
<dbReference type="GO" id="GO:0055037">
    <property type="term" value="C:recycling endosome"/>
    <property type="evidence" value="ECO:0000266"/>
    <property type="project" value="MGI"/>
</dbReference>
<dbReference type="GO" id="GO:0055038">
    <property type="term" value="C:recycling endosome membrane"/>
    <property type="evidence" value="ECO:0007669"/>
    <property type="project" value="UniProtKB-SubCell"/>
</dbReference>
<dbReference type="GO" id="GO:0030141">
    <property type="term" value="C:secretory granule"/>
    <property type="evidence" value="ECO:0000314"/>
    <property type="project" value="MGI"/>
</dbReference>
<dbReference type="GO" id="GO:0031201">
    <property type="term" value="C:SNARE complex"/>
    <property type="evidence" value="ECO:0007669"/>
    <property type="project" value="Ensembl"/>
</dbReference>
<dbReference type="GO" id="GO:0045202">
    <property type="term" value="C:synapse"/>
    <property type="evidence" value="ECO:0007669"/>
    <property type="project" value="UniProtKB-SubCell"/>
</dbReference>
<dbReference type="GO" id="GO:0017156">
    <property type="term" value="P:calcium-ion regulated exocytosis"/>
    <property type="evidence" value="ECO:0000315"/>
    <property type="project" value="MGI"/>
</dbReference>
<dbReference type="GO" id="GO:0071346">
    <property type="term" value="P:cellular response to type II interferon"/>
    <property type="evidence" value="ECO:0000314"/>
    <property type="project" value="MGI"/>
</dbReference>
<dbReference type="GO" id="GO:0051649">
    <property type="term" value="P:establishment of localization in cell"/>
    <property type="evidence" value="ECO:0000315"/>
    <property type="project" value="MGI"/>
</dbReference>
<dbReference type="GO" id="GO:0043001">
    <property type="term" value="P:Golgi to plasma membrane protein transport"/>
    <property type="evidence" value="ECO:0000315"/>
    <property type="project" value="MGI"/>
</dbReference>
<dbReference type="GO" id="GO:1903531">
    <property type="term" value="P:negative regulation of secretion by cell"/>
    <property type="evidence" value="ECO:0007669"/>
    <property type="project" value="Ensembl"/>
</dbReference>
<dbReference type="GO" id="GO:0001921">
    <property type="term" value="P:positive regulation of receptor recycling"/>
    <property type="evidence" value="ECO:0000314"/>
    <property type="project" value="UniProtKB"/>
</dbReference>
<dbReference type="GO" id="GO:0042147">
    <property type="term" value="P:retrograde transport, endosome to Golgi"/>
    <property type="evidence" value="ECO:0000250"/>
    <property type="project" value="UniProtKB"/>
</dbReference>
<dbReference type="GO" id="GO:0035493">
    <property type="term" value="P:SNARE complex assembly"/>
    <property type="evidence" value="ECO:0000314"/>
    <property type="project" value="BHF-UCL"/>
</dbReference>
<dbReference type="GO" id="GO:0034446">
    <property type="term" value="P:substrate adhesion-dependent cell spreading"/>
    <property type="evidence" value="ECO:0000314"/>
    <property type="project" value="UniProtKB"/>
</dbReference>
<dbReference type="GO" id="GO:0016192">
    <property type="term" value="P:vesicle-mediated transport"/>
    <property type="evidence" value="ECO:0000314"/>
    <property type="project" value="UniProtKB"/>
</dbReference>
<dbReference type="CDD" id="cd15870">
    <property type="entry name" value="R-SNARE_VAMP2"/>
    <property type="match status" value="1"/>
</dbReference>
<dbReference type="FunFam" id="1.20.5.110:FF:000013">
    <property type="entry name" value="Vesicle-associated membrane protein 2"/>
    <property type="match status" value="1"/>
</dbReference>
<dbReference type="Gene3D" id="1.20.5.110">
    <property type="match status" value="1"/>
</dbReference>
<dbReference type="InterPro" id="IPR001388">
    <property type="entry name" value="Synaptobrevin-like"/>
</dbReference>
<dbReference type="InterPro" id="IPR016444">
    <property type="entry name" value="Synaptobrevin/VAMP"/>
</dbReference>
<dbReference type="InterPro" id="IPR042855">
    <property type="entry name" value="V_SNARE_CC"/>
</dbReference>
<dbReference type="PANTHER" id="PTHR45701">
    <property type="entry name" value="SYNAPTOBREVIN FAMILY MEMBER"/>
    <property type="match status" value="1"/>
</dbReference>
<dbReference type="Pfam" id="PF00957">
    <property type="entry name" value="Synaptobrevin"/>
    <property type="match status" value="1"/>
</dbReference>
<dbReference type="PIRSF" id="PIRSF005409">
    <property type="entry name" value="Synaptobrevin_euk"/>
    <property type="match status" value="1"/>
</dbReference>
<dbReference type="PRINTS" id="PR00219">
    <property type="entry name" value="SYNAPTOBREVN"/>
</dbReference>
<dbReference type="SUPFAM" id="SSF58038">
    <property type="entry name" value="SNARE fusion complex"/>
    <property type="match status" value="1"/>
</dbReference>
<dbReference type="PROSITE" id="PS00417">
    <property type="entry name" value="SYNAPTOBREVIN"/>
    <property type="match status" value="1"/>
</dbReference>
<dbReference type="PROSITE" id="PS50892">
    <property type="entry name" value="V_SNARE"/>
    <property type="match status" value="1"/>
</dbReference>